<sequence>MNTHIYADIITIGDEILYGQITDTNSQWISAELDKLGIKTRRKSSVSDKADEILQMLREASQRSSIVILTGGLGPTNDDITKKTLCTYFKTELVWNDAVLAHLENLFFIRGRVMNALNKEQALIPSNCEVLTNRHGTAPGMWFDVNGVVYISLPGVPFEMKGILSDVGFDKLKHRFQTPHIIHRVIKTSGVGETTLAELIADWEAALPPYMGLAYLPSAGEVKLRLTGSGDNLEQLQAEIQQQVDSVLPSIEKYVYGFDADTLEYTVGQLLKKQNKTIATAESCTGGYLAHLLTSVAGASAYYSGSVVAYQNKIKTDFLDVPAEVLSKYGAVSEETVKIMAAEVRKKFGASIGVSASGIAGPDGGTEEKPVGTIWIAYADESKVVTLKLQLSNIRENNIRMTALAILNLVRRQLKEVK</sequence>
<comment type="similarity">
    <text evidence="1">Belongs to the CinA family.</text>
</comment>
<dbReference type="EMBL" id="CP000383">
    <property type="protein sequence ID" value="ABG59780.1"/>
    <property type="molecule type" value="Genomic_DNA"/>
</dbReference>
<dbReference type="RefSeq" id="WP_011585894.1">
    <property type="nucleotide sequence ID" value="NC_008255.1"/>
</dbReference>
<dbReference type="SMR" id="Q11S34"/>
<dbReference type="STRING" id="269798.CHU_2526"/>
<dbReference type="KEGG" id="chu:CHU_2526"/>
<dbReference type="eggNOG" id="COG1058">
    <property type="taxonomic scope" value="Bacteria"/>
</dbReference>
<dbReference type="eggNOG" id="COG1546">
    <property type="taxonomic scope" value="Bacteria"/>
</dbReference>
<dbReference type="HOGENOM" id="CLU_030805_9_2_10"/>
<dbReference type="OrthoDB" id="9801454at2"/>
<dbReference type="Proteomes" id="UP000001822">
    <property type="component" value="Chromosome"/>
</dbReference>
<dbReference type="CDD" id="cd00885">
    <property type="entry name" value="cinA"/>
    <property type="match status" value="1"/>
</dbReference>
<dbReference type="Gene3D" id="3.30.70.2860">
    <property type="match status" value="1"/>
</dbReference>
<dbReference type="Gene3D" id="3.90.950.20">
    <property type="entry name" value="CinA-like"/>
    <property type="match status" value="1"/>
</dbReference>
<dbReference type="Gene3D" id="3.40.980.10">
    <property type="entry name" value="MoaB/Mog-like domain"/>
    <property type="match status" value="1"/>
</dbReference>
<dbReference type="HAMAP" id="MF_00226_B">
    <property type="entry name" value="CinA_B"/>
    <property type="match status" value="1"/>
</dbReference>
<dbReference type="InterPro" id="IPR050101">
    <property type="entry name" value="CinA"/>
</dbReference>
<dbReference type="InterPro" id="IPR036653">
    <property type="entry name" value="CinA-like_C"/>
</dbReference>
<dbReference type="InterPro" id="IPR008136">
    <property type="entry name" value="CinA_C"/>
</dbReference>
<dbReference type="InterPro" id="IPR041424">
    <property type="entry name" value="CinA_KH"/>
</dbReference>
<dbReference type="InterPro" id="IPR008135">
    <property type="entry name" value="Competence-induced_CinA"/>
</dbReference>
<dbReference type="InterPro" id="IPR036425">
    <property type="entry name" value="MoaB/Mog-like_dom_sf"/>
</dbReference>
<dbReference type="InterPro" id="IPR001453">
    <property type="entry name" value="MoaB/Mog_dom"/>
</dbReference>
<dbReference type="NCBIfam" id="TIGR00200">
    <property type="entry name" value="cinA_nterm"/>
    <property type="match status" value="1"/>
</dbReference>
<dbReference type="NCBIfam" id="TIGR00199">
    <property type="entry name" value="PncC_domain"/>
    <property type="match status" value="1"/>
</dbReference>
<dbReference type="NCBIfam" id="NF001813">
    <property type="entry name" value="PRK00549.1"/>
    <property type="match status" value="1"/>
</dbReference>
<dbReference type="PANTHER" id="PTHR13939">
    <property type="entry name" value="NICOTINAMIDE-NUCLEOTIDE AMIDOHYDROLASE PNCC"/>
    <property type="match status" value="1"/>
</dbReference>
<dbReference type="PANTHER" id="PTHR13939:SF0">
    <property type="entry name" value="NMN AMIDOHYDROLASE-LIKE PROTEIN YFAY"/>
    <property type="match status" value="1"/>
</dbReference>
<dbReference type="Pfam" id="PF02464">
    <property type="entry name" value="CinA"/>
    <property type="match status" value="1"/>
</dbReference>
<dbReference type="Pfam" id="PF18146">
    <property type="entry name" value="CinA_KH"/>
    <property type="match status" value="1"/>
</dbReference>
<dbReference type="Pfam" id="PF00994">
    <property type="entry name" value="MoCF_biosynth"/>
    <property type="match status" value="1"/>
</dbReference>
<dbReference type="PIRSF" id="PIRSF006728">
    <property type="entry name" value="CinA"/>
    <property type="match status" value="1"/>
</dbReference>
<dbReference type="SMART" id="SM00852">
    <property type="entry name" value="MoCF_biosynth"/>
    <property type="match status" value="1"/>
</dbReference>
<dbReference type="SUPFAM" id="SSF142433">
    <property type="entry name" value="CinA-like"/>
    <property type="match status" value="1"/>
</dbReference>
<dbReference type="SUPFAM" id="SSF53218">
    <property type="entry name" value="Molybdenum cofactor biosynthesis proteins"/>
    <property type="match status" value="1"/>
</dbReference>
<organism>
    <name type="scientific">Cytophaga hutchinsonii (strain ATCC 33406 / DSM 1761 / CIP 103989 / NBRC 15051 / NCIMB 9469 / D465)</name>
    <dbReference type="NCBI Taxonomy" id="269798"/>
    <lineage>
        <taxon>Bacteria</taxon>
        <taxon>Pseudomonadati</taxon>
        <taxon>Bacteroidota</taxon>
        <taxon>Cytophagia</taxon>
        <taxon>Cytophagales</taxon>
        <taxon>Cytophagaceae</taxon>
        <taxon>Cytophaga</taxon>
    </lineage>
</organism>
<accession>Q11S34</accession>
<reference key="1">
    <citation type="journal article" date="2007" name="Appl. Environ. Microbiol.">
        <title>Genome sequence of the cellulolytic gliding bacterium Cytophaga hutchinsonii.</title>
        <authorList>
            <person name="Xie G."/>
            <person name="Bruce D.C."/>
            <person name="Challacombe J.F."/>
            <person name="Chertkov O."/>
            <person name="Detter J.C."/>
            <person name="Gilna P."/>
            <person name="Han C.S."/>
            <person name="Lucas S."/>
            <person name="Misra M."/>
            <person name="Myers G.L."/>
            <person name="Richardson P."/>
            <person name="Tapia R."/>
            <person name="Thayer N."/>
            <person name="Thompson L.S."/>
            <person name="Brettin T.S."/>
            <person name="Henrissat B."/>
            <person name="Wilson D.B."/>
            <person name="McBride M.J."/>
        </authorList>
    </citation>
    <scope>NUCLEOTIDE SEQUENCE [LARGE SCALE GENOMIC DNA]</scope>
    <source>
        <strain>ATCC 33406 / DSM 1761 / JCM 20678 / CIP 103989 / IAM 12607 / NBRC 15051 / NCIMB 9469 / D465</strain>
    </source>
</reference>
<keyword id="KW-1185">Reference proteome</keyword>
<feature type="chain" id="PRO_1000058704" description="CinA-like protein">
    <location>
        <begin position="1"/>
        <end position="418"/>
    </location>
</feature>
<name>CINAL_CYTH3</name>
<evidence type="ECO:0000255" key="1">
    <source>
        <dbReference type="HAMAP-Rule" id="MF_00226"/>
    </source>
</evidence>
<gene>
    <name type="ordered locus">CHU_2526</name>
</gene>
<protein>
    <recommendedName>
        <fullName evidence="1">CinA-like protein</fullName>
    </recommendedName>
</protein>
<proteinExistence type="inferred from homology"/>